<dbReference type="EMBL" id="CP000305">
    <property type="protein sequence ID" value="ABG17621.1"/>
    <property type="molecule type" value="Genomic_DNA"/>
</dbReference>
<dbReference type="EMBL" id="ACNQ01000008">
    <property type="protein sequence ID" value="EEO77736.1"/>
    <property type="molecule type" value="Genomic_DNA"/>
</dbReference>
<dbReference type="RefSeq" id="WP_002214676.1">
    <property type="nucleotide sequence ID" value="NZ_ACNQ01000008.1"/>
</dbReference>
<dbReference type="SMR" id="Q1CK59"/>
<dbReference type="KEGG" id="ypn:YPN_1291"/>
<dbReference type="HOGENOM" id="CLU_018816_2_0_6"/>
<dbReference type="Proteomes" id="UP000008936">
    <property type="component" value="Chromosome"/>
</dbReference>
<dbReference type="GO" id="GO:1990281">
    <property type="term" value="C:efflux pump complex"/>
    <property type="evidence" value="ECO:0007669"/>
    <property type="project" value="TreeGrafter"/>
</dbReference>
<dbReference type="GO" id="GO:0005886">
    <property type="term" value="C:plasma membrane"/>
    <property type="evidence" value="ECO:0007669"/>
    <property type="project" value="UniProtKB-SubCell"/>
</dbReference>
<dbReference type="GO" id="GO:0015562">
    <property type="term" value="F:efflux transmembrane transporter activity"/>
    <property type="evidence" value="ECO:0007669"/>
    <property type="project" value="TreeGrafter"/>
</dbReference>
<dbReference type="FunFam" id="2.40.420.20:FF:000001">
    <property type="entry name" value="Efflux RND transporter periplasmic adaptor subunit"/>
    <property type="match status" value="1"/>
</dbReference>
<dbReference type="FunFam" id="1.10.287.470:FF:000005">
    <property type="entry name" value="Multidrug resistance protein MdtA"/>
    <property type="match status" value="1"/>
</dbReference>
<dbReference type="FunFam" id="2.40.30.170:FF:000006">
    <property type="entry name" value="Multidrug resistance protein MdtA"/>
    <property type="match status" value="1"/>
</dbReference>
<dbReference type="Gene3D" id="2.40.30.170">
    <property type="match status" value="1"/>
</dbReference>
<dbReference type="Gene3D" id="2.40.420.20">
    <property type="match status" value="1"/>
</dbReference>
<dbReference type="Gene3D" id="2.40.50.100">
    <property type="match status" value="1"/>
</dbReference>
<dbReference type="Gene3D" id="1.10.287.470">
    <property type="entry name" value="Helix hairpin bin"/>
    <property type="match status" value="1"/>
</dbReference>
<dbReference type="HAMAP" id="MF_01422">
    <property type="entry name" value="MdtA"/>
    <property type="match status" value="1"/>
</dbReference>
<dbReference type="InterPro" id="IPR032317">
    <property type="entry name" value="CusB_D23"/>
</dbReference>
<dbReference type="InterPro" id="IPR022824">
    <property type="entry name" value="Multidrug-R_MdtA"/>
</dbReference>
<dbReference type="InterPro" id="IPR006143">
    <property type="entry name" value="RND_pump_MFP"/>
</dbReference>
<dbReference type="NCBIfam" id="NF008589">
    <property type="entry name" value="PRK11556.1"/>
    <property type="match status" value="1"/>
</dbReference>
<dbReference type="NCBIfam" id="TIGR01730">
    <property type="entry name" value="RND_mfp"/>
    <property type="match status" value="1"/>
</dbReference>
<dbReference type="PANTHER" id="PTHR30469">
    <property type="entry name" value="MULTIDRUG RESISTANCE PROTEIN MDTA"/>
    <property type="match status" value="1"/>
</dbReference>
<dbReference type="PANTHER" id="PTHR30469:SF12">
    <property type="entry name" value="MULTIDRUG RESISTANCE PROTEIN MDTA"/>
    <property type="match status" value="1"/>
</dbReference>
<dbReference type="Pfam" id="PF16576">
    <property type="entry name" value="HlyD_D23"/>
    <property type="match status" value="1"/>
</dbReference>
<dbReference type="SUPFAM" id="SSF111369">
    <property type="entry name" value="HlyD-like secretion proteins"/>
    <property type="match status" value="1"/>
</dbReference>
<sequence>MKSQSKRTSRLFVFVGVVVAIIIAVLSWRYFGTGSDNNTSGAQQSARGQDTSHGGRRNTPLAPVQAATATEQEVPRYLTGLGTVIAANTVTVTSRVDGELMALHFTEGQQVKAGDLLAEIDPRPYEVQLTQAQGQLAKDQATLDNARRDLARYQKLSKTGLISQQELDTQSSLVRQSEGSVKADQGAIDSAKLQLTYSRITAPISGRVGLKQVDVGNYITSGTATPIVVITQTHPVDVVFTLPESDIPAIIQAQKNAEKTHAIVPVEAWDRTNKQMLAQGYLLSIDNQIDTTTGTIKLKARFNNEDDVLFPNQFVNARIKVDLLQNAVVVPTAAVQMGSEGNFVWTLDDANKVSKHLVTTGIQNSQQVVIDAGLNAGQRVVTDGIDRLTEGVQVEVVTPRSANTDANPASAEKAAAEAEGSTPHQGRGRPANAPARSTTAAEKS</sequence>
<name>MDTA_YERPN</name>
<organism>
    <name type="scientific">Yersinia pestis bv. Antiqua (strain Nepal516)</name>
    <dbReference type="NCBI Taxonomy" id="377628"/>
    <lineage>
        <taxon>Bacteria</taxon>
        <taxon>Pseudomonadati</taxon>
        <taxon>Pseudomonadota</taxon>
        <taxon>Gammaproteobacteria</taxon>
        <taxon>Enterobacterales</taxon>
        <taxon>Yersiniaceae</taxon>
        <taxon>Yersinia</taxon>
    </lineage>
</organism>
<accession>Q1CK59</accession>
<accession>C4GRP5</accession>
<feature type="signal peptide" evidence="1">
    <location>
        <begin position="1"/>
        <end position="20"/>
    </location>
</feature>
<feature type="chain" id="PRO_5000115236" description="Multidrug resistance protein MdtA">
    <location>
        <begin position="21"/>
        <end position="444"/>
    </location>
</feature>
<feature type="region of interest" description="Disordered" evidence="2">
    <location>
        <begin position="37"/>
        <end position="60"/>
    </location>
</feature>
<feature type="region of interest" description="Disordered" evidence="2">
    <location>
        <begin position="398"/>
        <end position="444"/>
    </location>
</feature>
<feature type="compositionally biased region" description="Polar residues" evidence="2">
    <location>
        <begin position="37"/>
        <end position="52"/>
    </location>
</feature>
<feature type="compositionally biased region" description="Low complexity" evidence="2">
    <location>
        <begin position="406"/>
        <end position="419"/>
    </location>
</feature>
<feature type="compositionally biased region" description="Polar residues" evidence="2">
    <location>
        <begin position="435"/>
        <end position="444"/>
    </location>
</feature>
<protein>
    <recommendedName>
        <fullName evidence="1">Multidrug resistance protein MdtA</fullName>
    </recommendedName>
    <alternativeName>
        <fullName evidence="1">Multidrug transporter MdtA</fullName>
    </alternativeName>
</protein>
<gene>
    <name evidence="1" type="primary">mdtA</name>
    <name type="ordered locus">YPN_1291</name>
    <name type="ORF">YP516_1421</name>
</gene>
<keyword id="KW-0997">Cell inner membrane</keyword>
<keyword id="KW-1003">Cell membrane</keyword>
<keyword id="KW-0472">Membrane</keyword>
<keyword id="KW-0677">Repeat</keyword>
<keyword id="KW-0732">Signal</keyword>
<keyword id="KW-0813">Transport</keyword>
<proteinExistence type="inferred from homology"/>
<reference key="1">
    <citation type="journal article" date="2006" name="J. Bacteriol.">
        <title>Complete genome sequence of Yersinia pestis strains Antiqua and Nepal516: evidence of gene reduction in an emerging pathogen.</title>
        <authorList>
            <person name="Chain P.S.G."/>
            <person name="Hu P."/>
            <person name="Malfatti S.A."/>
            <person name="Radnedge L."/>
            <person name="Larimer F."/>
            <person name="Vergez L.M."/>
            <person name="Worsham P."/>
            <person name="Chu M.C."/>
            <person name="Andersen G.L."/>
        </authorList>
    </citation>
    <scope>NUCLEOTIDE SEQUENCE [LARGE SCALE GENOMIC DNA]</scope>
    <source>
        <strain>Nepal516</strain>
    </source>
</reference>
<reference key="2">
    <citation type="submission" date="2009-04" db="EMBL/GenBank/DDBJ databases">
        <title>Yersinia pestis Nepal516A whole genome shotgun sequencing project.</title>
        <authorList>
            <person name="Plunkett G. III"/>
            <person name="Anderson B.D."/>
            <person name="Baumler D.J."/>
            <person name="Burland V."/>
            <person name="Cabot E.L."/>
            <person name="Glasner J.D."/>
            <person name="Mau B."/>
            <person name="Neeno-Eckwall E."/>
            <person name="Perna N.T."/>
            <person name="Munk A.C."/>
            <person name="Tapia R."/>
            <person name="Green L.D."/>
            <person name="Rogers Y.C."/>
            <person name="Detter J.C."/>
            <person name="Bruce D.C."/>
            <person name="Brettin T.S."/>
        </authorList>
    </citation>
    <scope>NUCLEOTIDE SEQUENCE [LARGE SCALE GENOMIC DNA]</scope>
    <source>
        <strain>Nepal516</strain>
    </source>
</reference>
<comment type="subunit">
    <text evidence="1">Part of a tripartite efflux system composed of MdtA, MdtB and MdtC.</text>
</comment>
<comment type="subcellular location">
    <subcellularLocation>
        <location evidence="1">Cell inner membrane</location>
        <topology evidence="1">Peripheral membrane protein</topology>
    </subcellularLocation>
</comment>
<comment type="similarity">
    <text evidence="1">Belongs to the membrane fusion protein (MFP) (TC 8.A.1) family.</text>
</comment>
<evidence type="ECO:0000255" key="1">
    <source>
        <dbReference type="HAMAP-Rule" id="MF_01422"/>
    </source>
</evidence>
<evidence type="ECO:0000256" key="2">
    <source>
        <dbReference type="SAM" id="MobiDB-lite"/>
    </source>
</evidence>